<accession>G2K449</accession>
<accession>Q8Y960</accession>
<sequence>MPKSEIRKLLQEIKKQVDNPGNSSTTEIKKMASEAGIDEQTAEEIYHLLTEFYQAVEEHGGIEKYMHSNISWLKIELELLSACYQIAILEDMKVLDISEMLSLNDLRIFPKTPSQLQNTYYKLKKELIQVEDIPKNKPGRKRKTQKNTKKEKTNIFGKVVPAEFKAPASIKEQISYDKSREKNLVDLLSGVKSNVQLLSENQGEENNVYDLLKSIYSLSSLAVQKEELDKKYQDLQTKCQELEQENSYLKQQNETMTDSFHTLVLQVADFAYASDLDQIQALPLFSQQLVVTLNQLGVFKENYKQM</sequence>
<feature type="chain" id="PRO_0000419031" description="Motility gene repressor MogR">
    <location>
        <begin position="1"/>
        <end position="306"/>
    </location>
</feature>
<organism>
    <name type="scientific">Listeria monocytogenes serotype 1/2a (strain 10403S)</name>
    <dbReference type="NCBI Taxonomy" id="393133"/>
    <lineage>
        <taxon>Bacteria</taxon>
        <taxon>Bacillati</taxon>
        <taxon>Bacillota</taxon>
        <taxon>Bacilli</taxon>
        <taxon>Bacillales</taxon>
        <taxon>Listeriaceae</taxon>
        <taxon>Listeria</taxon>
    </lineage>
</organism>
<protein>
    <recommendedName>
        <fullName>Motility gene repressor MogR</fullName>
    </recommendedName>
</protein>
<reference key="1">
    <citation type="journal article" date="2004" name="Proc. Natl. Acad. Sci. U.S.A.">
        <title>Listeria monocytogenes regulates flagellar motility gene expression through MogR, a transcriptional repressor required for virulence.</title>
        <authorList>
            <person name="Gruendling A."/>
            <person name="Burrack L.S."/>
            <person name="Bouwer H.G.A."/>
            <person name="Higgins D.E."/>
        </authorList>
    </citation>
    <scope>NUCLEOTIDE SEQUENCE [GENOMIC DNA]</scope>
    <scope>FUNCTION</scope>
    <scope>SUBCELLULAR LOCATION</scope>
    <source>
        <strain>10403S</strain>
    </source>
</reference>
<reference key="2">
    <citation type="submission" date="2010-04" db="EMBL/GenBank/DDBJ databases">
        <title>The genome sequence of Listeria monocytogenes strain 10403S.</title>
        <authorList>
            <consortium name="The Broad Institute Genome Sequencing Platform"/>
            <consortium name="The Broad Institute Genome Sequencing Center for Infectious Disease"/>
            <person name="Borowsky M."/>
            <person name="Borodovsky M."/>
            <person name="Young S.K."/>
            <person name="Zeng Q."/>
            <person name="Koehrsen M."/>
            <person name="Fitzgerald M."/>
            <person name="Wiedmann M."/>
            <person name="Swaminathan B."/>
            <person name="Lauer P."/>
            <person name="Portnoy D."/>
            <person name="Cossart P."/>
            <person name="Buchrieser C."/>
            <person name="Higgins D."/>
            <person name="Abouelleil A."/>
            <person name="Alvarado L."/>
            <person name="Arachchi H.M."/>
            <person name="Berlin A."/>
            <person name="Borenstein D."/>
            <person name="Brown A."/>
            <person name="Chapman S.B."/>
            <person name="Chen Z."/>
            <person name="Dunbar C.D."/>
            <person name="Engels R."/>
            <person name="Freedman E."/>
            <person name="Gearin G."/>
            <person name="Gellesch M."/>
            <person name="Goldberg J."/>
            <person name="Griggs A."/>
            <person name="Gujja S."/>
            <person name="Heilman E."/>
            <person name="Heiman D."/>
            <person name="Howarth C."/>
            <person name="Jen D."/>
            <person name="Larson L."/>
            <person name="Lui A."/>
            <person name="MacDonald J."/>
            <person name="Mehta T."/>
            <person name="Montmayeur A."/>
            <person name="Neiman D."/>
            <person name="Park D."/>
            <person name="Pearson M."/>
            <person name="Priest M."/>
            <person name="Richards J."/>
            <person name="Roberts A."/>
            <person name="Saif S."/>
            <person name="Shea T."/>
            <person name="Shenoy N."/>
            <person name="Sisk P."/>
            <person name="Stolte C."/>
            <person name="Sykes S."/>
            <person name="Walk T."/>
            <person name="White J."/>
            <person name="Yandava C."/>
            <person name="Haas B."/>
            <person name="Nusbaum C."/>
            <person name="Birren B."/>
        </authorList>
    </citation>
    <scope>NUCLEOTIDE SEQUENCE [LARGE SCALE GENOMIC DNA]</scope>
    <source>
        <strain>10403S</strain>
    </source>
</reference>
<gene>
    <name type="primary">mogR</name>
    <name type="ordered locus">LMRG_00362</name>
</gene>
<name>MOGR_LISM4</name>
<proteinExistence type="predicted"/>
<dbReference type="EMBL" id="AY590468">
    <property type="protein sequence ID" value="AAT48711.1"/>
    <property type="molecule type" value="Genomic_DNA"/>
</dbReference>
<dbReference type="EMBL" id="CP002002">
    <property type="protein sequence ID" value="AEO05677.1"/>
    <property type="molecule type" value="Genomic_DNA"/>
</dbReference>
<dbReference type="RefSeq" id="WP_003721794.1">
    <property type="nucleotide sequence ID" value="NC_017544.1"/>
</dbReference>
<dbReference type="SMR" id="G2K449"/>
<dbReference type="KEGG" id="lmt:LMRG_00362"/>
<dbReference type="HOGENOM" id="CLU_080650_0_0_9"/>
<dbReference type="Proteomes" id="UP000001288">
    <property type="component" value="Chromosome"/>
</dbReference>
<dbReference type="GO" id="GO:0005737">
    <property type="term" value="C:cytoplasm"/>
    <property type="evidence" value="ECO:0007669"/>
    <property type="project" value="UniProtKB-SubCell"/>
</dbReference>
<dbReference type="GO" id="GO:0003677">
    <property type="term" value="F:DNA binding"/>
    <property type="evidence" value="ECO:0007669"/>
    <property type="project" value="UniProtKB-KW"/>
</dbReference>
<dbReference type="FunFam" id="1.20.120.1030:FF:000001">
    <property type="entry name" value="Motility gene repressor MogR"/>
    <property type="match status" value="1"/>
</dbReference>
<dbReference type="Gene3D" id="1.20.120.1030">
    <property type="entry name" value="Motility repressor MogR, DNA-binding domain"/>
    <property type="match status" value="1"/>
</dbReference>
<dbReference type="InterPro" id="IPR021009">
    <property type="entry name" value="MogR_DNA-bd"/>
</dbReference>
<dbReference type="InterPro" id="IPR038245">
    <property type="entry name" value="MogR_DNA-bd_sf"/>
</dbReference>
<dbReference type="Pfam" id="PF12181">
    <property type="entry name" value="MogR_DNAbind"/>
    <property type="match status" value="1"/>
</dbReference>
<comment type="function">
    <text evidence="1">Transcriptional repressor of flagellar motility genes, such as flaA, during extracellular growth at 37 degrees Celsius and during intracellular infection. Binds directly to the gene promoter region and probably prevents RNA polymerase binding. At low temperatures, MogR repression activity is modulated by the DegU response regulator in an unknown mechanism. Required for full virulence.</text>
</comment>
<comment type="subcellular location">
    <subcellularLocation>
        <location evidence="1">Cytoplasm</location>
    </subcellularLocation>
</comment>
<evidence type="ECO:0000269" key="1">
    <source>
    </source>
</evidence>
<keyword id="KW-0963">Cytoplasm</keyword>
<keyword id="KW-0238">DNA-binding</keyword>
<keyword id="KW-0678">Repressor</keyword>
<keyword id="KW-0804">Transcription</keyword>
<keyword id="KW-0805">Transcription regulation</keyword>
<keyword id="KW-0843">Virulence</keyword>